<reference key="1">
    <citation type="journal article" date="2005" name="J. Bacteriol.">
        <title>Completion of the genome sequence of Brucella abortus and comparison to the highly similar genomes of Brucella melitensis and Brucella suis.</title>
        <authorList>
            <person name="Halling S.M."/>
            <person name="Peterson-Burch B.D."/>
            <person name="Bricker B.J."/>
            <person name="Zuerner R.L."/>
            <person name="Qing Z."/>
            <person name="Li L.-L."/>
            <person name="Kapur V."/>
            <person name="Alt D.P."/>
            <person name="Olsen S.C."/>
        </authorList>
    </citation>
    <scope>NUCLEOTIDE SEQUENCE [LARGE SCALE GENOMIC DNA]</scope>
    <source>
        <strain>9-941</strain>
    </source>
</reference>
<dbReference type="EC" id="4.2.3.3" evidence="1"/>
<dbReference type="EMBL" id="AE017224">
    <property type="protein sequence ID" value="AAX76367.1"/>
    <property type="molecule type" value="Genomic_DNA"/>
</dbReference>
<dbReference type="RefSeq" id="WP_002965604.1">
    <property type="nucleotide sequence ID" value="NC_006933.1"/>
</dbReference>
<dbReference type="SMR" id="P0CB36"/>
<dbReference type="EnsemblBacteria" id="AAX76367">
    <property type="protein sequence ID" value="AAX76367"/>
    <property type="gene ID" value="BruAb2_0988"/>
</dbReference>
<dbReference type="KEGG" id="bmb:BruAb2_0988"/>
<dbReference type="HOGENOM" id="CLU_120420_1_0_5"/>
<dbReference type="Proteomes" id="UP000000540">
    <property type="component" value="Chromosome II"/>
</dbReference>
<dbReference type="GO" id="GO:0005829">
    <property type="term" value="C:cytosol"/>
    <property type="evidence" value="ECO:0007669"/>
    <property type="project" value="TreeGrafter"/>
</dbReference>
<dbReference type="GO" id="GO:0008929">
    <property type="term" value="F:methylglyoxal synthase activity"/>
    <property type="evidence" value="ECO:0007669"/>
    <property type="project" value="UniProtKB-UniRule"/>
</dbReference>
<dbReference type="GO" id="GO:0019242">
    <property type="term" value="P:methylglyoxal biosynthetic process"/>
    <property type="evidence" value="ECO:0007669"/>
    <property type="project" value="UniProtKB-UniRule"/>
</dbReference>
<dbReference type="CDD" id="cd01422">
    <property type="entry name" value="MGS"/>
    <property type="match status" value="1"/>
</dbReference>
<dbReference type="Gene3D" id="3.40.50.1380">
    <property type="entry name" value="Methylglyoxal synthase-like domain"/>
    <property type="match status" value="1"/>
</dbReference>
<dbReference type="HAMAP" id="MF_00549">
    <property type="entry name" value="Methylglyoxal_synth"/>
    <property type="match status" value="1"/>
</dbReference>
<dbReference type="InterPro" id="IPR004363">
    <property type="entry name" value="Methylgl_synth"/>
</dbReference>
<dbReference type="InterPro" id="IPR018148">
    <property type="entry name" value="Methylglyoxal_synth_AS"/>
</dbReference>
<dbReference type="InterPro" id="IPR011607">
    <property type="entry name" value="MGS-like_dom"/>
</dbReference>
<dbReference type="InterPro" id="IPR036914">
    <property type="entry name" value="MGS-like_dom_sf"/>
</dbReference>
<dbReference type="NCBIfam" id="TIGR00160">
    <property type="entry name" value="MGSA"/>
    <property type="match status" value="1"/>
</dbReference>
<dbReference type="NCBIfam" id="NF003559">
    <property type="entry name" value="PRK05234.1"/>
    <property type="match status" value="1"/>
</dbReference>
<dbReference type="PANTHER" id="PTHR30492">
    <property type="entry name" value="METHYLGLYOXAL SYNTHASE"/>
    <property type="match status" value="1"/>
</dbReference>
<dbReference type="PANTHER" id="PTHR30492:SF0">
    <property type="entry name" value="METHYLGLYOXAL SYNTHASE"/>
    <property type="match status" value="1"/>
</dbReference>
<dbReference type="Pfam" id="PF02142">
    <property type="entry name" value="MGS"/>
    <property type="match status" value="1"/>
</dbReference>
<dbReference type="PIRSF" id="PIRSF006614">
    <property type="entry name" value="Methylglyox_syn"/>
    <property type="match status" value="1"/>
</dbReference>
<dbReference type="SMART" id="SM00851">
    <property type="entry name" value="MGS"/>
    <property type="match status" value="1"/>
</dbReference>
<dbReference type="SUPFAM" id="SSF52335">
    <property type="entry name" value="Methylglyoxal synthase-like"/>
    <property type="match status" value="1"/>
</dbReference>
<dbReference type="PROSITE" id="PS01335">
    <property type="entry name" value="METHYLGLYOXAL_SYNTH"/>
    <property type="match status" value="1"/>
</dbReference>
<dbReference type="PROSITE" id="PS51855">
    <property type="entry name" value="MGS"/>
    <property type="match status" value="1"/>
</dbReference>
<name>MGSA_BRUAB</name>
<comment type="function">
    <text evidence="1">Catalyzes the formation of methylglyoxal from dihydroxyacetone phosphate.</text>
</comment>
<comment type="catalytic activity">
    <reaction evidence="1">
        <text>dihydroxyacetone phosphate = methylglyoxal + phosphate</text>
        <dbReference type="Rhea" id="RHEA:17937"/>
        <dbReference type="ChEBI" id="CHEBI:17158"/>
        <dbReference type="ChEBI" id="CHEBI:43474"/>
        <dbReference type="ChEBI" id="CHEBI:57642"/>
        <dbReference type="EC" id="4.2.3.3"/>
    </reaction>
</comment>
<comment type="similarity">
    <text evidence="1 2">Belongs to the methylglyoxal synthase family.</text>
</comment>
<accession>P0CB36</accession>
<accession>P0A3Q4</accession>
<accession>Q44615</accession>
<accession>Q576R7</accession>
<sequence>MTQRLRIALIAHDQKKDDMVAFARAHEQALSRYDIVATGTTGGLIQDACPSLNIHRVKSGPLGGDQQIGAMIAEGTVEVLIFFIDPLSPLPHDVDVKALTRLGSVYDIPMALNRATAEKLVRALD</sequence>
<keyword id="KW-0456">Lyase</keyword>
<organism>
    <name type="scientific">Brucella abortus biovar 1 (strain 9-941)</name>
    <dbReference type="NCBI Taxonomy" id="262698"/>
    <lineage>
        <taxon>Bacteria</taxon>
        <taxon>Pseudomonadati</taxon>
        <taxon>Pseudomonadota</taxon>
        <taxon>Alphaproteobacteria</taxon>
        <taxon>Hyphomicrobiales</taxon>
        <taxon>Brucellaceae</taxon>
        <taxon>Brucella/Ochrobactrum group</taxon>
        <taxon>Brucella</taxon>
    </lineage>
</organism>
<evidence type="ECO:0000255" key="1">
    <source>
        <dbReference type="HAMAP-Rule" id="MF_00549"/>
    </source>
</evidence>
<evidence type="ECO:0000305" key="2"/>
<proteinExistence type="inferred from homology"/>
<protein>
    <recommendedName>
        <fullName evidence="1">Methylglyoxal synthase</fullName>
        <shortName evidence="1">MGS</shortName>
        <ecNumber evidence="1">4.2.3.3</ecNumber>
    </recommendedName>
</protein>
<feature type="chain" id="PRO_0000178616" description="Methylglyoxal synthase">
    <location>
        <begin position="1"/>
        <end position="125"/>
    </location>
</feature>
<feature type="domain" description="MGS-like" evidence="1">
    <location>
        <begin position="1"/>
        <end position="125"/>
    </location>
</feature>
<feature type="active site" description="Proton donor/acceptor" evidence="1">
    <location>
        <position position="65"/>
    </location>
</feature>
<feature type="binding site" evidence="1">
    <location>
        <position position="12"/>
    </location>
    <ligand>
        <name>substrate</name>
    </ligand>
</feature>
<feature type="binding site" evidence="1">
    <location>
        <position position="16"/>
    </location>
    <ligand>
        <name>substrate</name>
    </ligand>
</feature>
<feature type="binding site" evidence="1">
    <location>
        <begin position="38"/>
        <end position="41"/>
    </location>
    <ligand>
        <name>substrate</name>
    </ligand>
</feature>
<feature type="binding site" evidence="1">
    <location>
        <begin position="59"/>
        <end position="60"/>
    </location>
    <ligand>
        <name>substrate</name>
    </ligand>
</feature>
<feature type="binding site" evidence="1">
    <location>
        <position position="92"/>
    </location>
    <ligand>
        <name>substrate</name>
    </ligand>
</feature>
<gene>
    <name evidence="1" type="primary">mgsA</name>
    <name type="ordered locus">BruAb2_0988</name>
</gene>